<comment type="function">
    <text evidence="3">Together with movement protein P17, plays an essential role in virus long distance movement.</text>
</comment>
<comment type="subunit">
    <text evidence="3">Homodimer (PubMed:30373157). Heterodimer with movement protein P17 (PubMed:30373157).</text>
</comment>
<comment type="subcellular location">
    <subcellularLocation>
        <location evidence="1">Host cell junction</location>
        <location evidence="1">Host plasmodesma</location>
    </subcellularLocation>
    <subcellularLocation>
        <location evidence="1">Host Golgi apparatus</location>
    </subcellularLocation>
    <subcellularLocation>
        <location evidence="6">Host chloroplast envelope</location>
    </subcellularLocation>
    <subcellularLocation>
        <location evidence="6">Host mitochondrion outer membrane</location>
    </subcellularLocation>
    <text evidence="3">P3a directs P17 to the mitochondrial outer membrane while P17 regulates the localization of the P3a-P17 heterodimer to plastids.</text>
</comment>
<comment type="domain">
    <text evidence="3">The C-terminus regulates the targeting to host mitochondria.</text>
</comment>
<comment type="similarity">
    <text evidence="5">Belongs to the polerovirus movement protein P3a family.</text>
</comment>
<comment type="caution">
    <text evidence="5">This sequence initiates at a non-canonical ATA isoleucine codon.</text>
</comment>
<gene>
    <name type="primary">ORF3a</name>
</gene>
<accession>P0DTK2</accession>
<name>P3A_PLRV1</name>
<dbReference type="EMBL" id="D00530">
    <property type="status" value="NOT_ANNOTATED_CDS"/>
    <property type="molecule type" value="Genomic_RNA"/>
</dbReference>
<dbReference type="SMR" id="P0DTK2"/>
<dbReference type="Proteomes" id="UP000006723">
    <property type="component" value="Segment"/>
</dbReference>
<dbReference type="GO" id="GO:0044177">
    <property type="term" value="C:host cell Golgi apparatus"/>
    <property type="evidence" value="ECO:0007669"/>
    <property type="project" value="UniProtKB-SubCell"/>
</dbReference>
<dbReference type="GO" id="GO:0044193">
    <property type="term" value="C:host cell mitochondrial outer membrane"/>
    <property type="evidence" value="ECO:0007669"/>
    <property type="project" value="UniProtKB-SubCell"/>
</dbReference>
<dbReference type="GO" id="GO:0044219">
    <property type="term" value="C:host cell plasmodesma"/>
    <property type="evidence" value="ECO:0007669"/>
    <property type="project" value="UniProtKB-SubCell"/>
</dbReference>
<dbReference type="GO" id="GO:0016020">
    <property type="term" value="C:membrane"/>
    <property type="evidence" value="ECO:0007669"/>
    <property type="project" value="UniProtKB-KW"/>
</dbReference>
<keyword id="KW-0903">Direct protein sequencing</keyword>
<keyword id="KW-1031">Host cell junction</keyword>
<keyword id="KW-1040">Host Golgi apparatus</keyword>
<keyword id="KW-1043">Host membrane</keyword>
<keyword id="KW-1045">Host mitochondrion</keyword>
<keyword id="KW-1047">Host mitochondrion outer membrane</keyword>
<keyword id="KW-0472">Membrane</keyword>
<keyword id="KW-1185">Reference proteome</keyword>
<keyword id="KW-0812">Transmembrane</keyword>
<keyword id="KW-1133">Transmembrane helix</keyword>
<evidence type="ECO:0000250" key="1">
    <source>
        <dbReference type="UniProtKB" id="P0DJZ8"/>
    </source>
</evidence>
<evidence type="ECO:0000255" key="2"/>
<evidence type="ECO:0000269" key="3">
    <source>
    </source>
</evidence>
<evidence type="ECO:0000303" key="4">
    <source>
    </source>
</evidence>
<evidence type="ECO:0000305" key="5"/>
<evidence type="ECO:0000305" key="6">
    <source>
    </source>
</evidence>
<protein>
    <recommendedName>
        <fullName evidence="4">Movement protein P3a</fullName>
    </recommendedName>
    <alternativeName>
        <fullName>Protein ORF3a</fullName>
    </alternativeName>
</protein>
<feature type="chain" id="PRO_0000455351" description="Movement protein P3a">
    <location>
        <begin position="1"/>
        <end position="45"/>
    </location>
</feature>
<feature type="transmembrane region" description="Helical" evidence="2">
    <location>
        <begin position="9"/>
        <end position="29"/>
    </location>
</feature>
<reference key="1">
    <citation type="journal article" date="1989" name="J. Gen. Virol.">
        <title>Nucleotide sequence of potato leafroll luteovirus RNA.</title>
        <authorList>
            <person name="Mayo M.A."/>
            <person name="Robinson D.J."/>
            <person name="Jolly C.A."/>
            <person name="Hyman L."/>
        </authorList>
    </citation>
    <scope>NUCLEOTIDE SEQUENCE [GENOMIC RNA]</scope>
</reference>
<reference key="2">
    <citation type="journal article" date="2015" name="PLoS Pathog.">
        <title>Discovery of a small non-AUG-initiated ORF in Poleroviruses and Luteoviruses that is required for long-distance movement.</title>
        <authorList>
            <person name="Smirnova E."/>
            <person name="Firth A.E."/>
            <person name="Miller W.A."/>
            <person name="Scheidecker D."/>
            <person name="Brault V."/>
            <person name="Reinbold C."/>
            <person name="Rakotondrafara A.M."/>
            <person name="Chung B.Y."/>
            <person name="Ziegler-Graff V."/>
        </authorList>
    </citation>
    <scope>IDENTIFICATION</scope>
</reference>
<reference key="3">
    <citation type="journal article" date="2018" name="Viruses">
        <title>The Interaction Dynamics of Two Potato Leafroll Virus Movement Proteins Affects Their Localization to the Outer Membranes of Mitochondria and Plastids.</title>
        <authorList>
            <person name="DeBlasio S.L."/>
            <person name="Xu Y."/>
            <person name="Johnson R.S."/>
            <person name="Rebelo A.R."/>
            <person name="MacCoss M.J."/>
            <person name="Gray S.M."/>
            <person name="Heck M."/>
        </authorList>
    </citation>
    <scope>PROTEIN SEQUENCE OF 37-45</scope>
    <scope>FUNCTION</scope>
    <scope>SUBUNIT</scope>
    <scope>SUBCELLULAR LOCATION</scope>
    <scope>INTERACTION WITH MOVEMENT PROTEIN P17</scope>
    <scope>DOMAIN</scope>
</reference>
<organismHost>
    <name type="scientific">Solanum tuberosum</name>
    <name type="common">Potato</name>
    <dbReference type="NCBI Taxonomy" id="4113"/>
</organismHost>
<proteinExistence type="evidence at protein level"/>
<organism>
    <name type="scientific">Potato leafroll virus (strain Potato/Scotland/strain 1/1984)</name>
    <name type="common">PLrV</name>
    <dbReference type="NCBI Taxonomy" id="12046"/>
    <lineage>
        <taxon>Viruses</taxon>
        <taxon>Riboviria</taxon>
        <taxon>Orthornavirae</taxon>
        <taxon>Pisuviricota</taxon>
        <taxon>Pisoniviricetes</taxon>
        <taxon>Sobelivirales</taxon>
        <taxon>Solemoviridae</taxon>
        <taxon>Polerovirus</taxon>
        <taxon>Potato leafroll virus</taxon>
    </lineage>
</organism>
<sequence length="45" mass="4980">MDYKFLAGFALGFSSAIPFSVAGLYFVYLKISSHVRSIVNEYGRG</sequence>